<reference key="1">
    <citation type="journal article" date="2007" name="J. Bacteriol.">
        <title>Genome sequence of Avery's virulent serotype 2 strain D39 of Streptococcus pneumoniae and comparison with that of unencapsulated laboratory strain R6.</title>
        <authorList>
            <person name="Lanie J.A."/>
            <person name="Ng W.-L."/>
            <person name="Kazmierczak K.M."/>
            <person name="Andrzejewski T.M."/>
            <person name="Davidsen T.M."/>
            <person name="Wayne K.J."/>
            <person name="Tettelin H."/>
            <person name="Glass J.I."/>
            <person name="Winkler M.E."/>
        </authorList>
    </citation>
    <scope>NUCLEOTIDE SEQUENCE [LARGE SCALE GENOMIC DNA]</scope>
    <source>
        <strain>D39 / NCTC 7466</strain>
    </source>
</reference>
<protein>
    <recommendedName>
        <fullName evidence="1">UPF0473 protein SPD_0182</fullName>
    </recommendedName>
</protein>
<organism>
    <name type="scientific">Streptococcus pneumoniae serotype 2 (strain D39 / NCTC 7466)</name>
    <dbReference type="NCBI Taxonomy" id="373153"/>
    <lineage>
        <taxon>Bacteria</taxon>
        <taxon>Bacillati</taxon>
        <taxon>Bacillota</taxon>
        <taxon>Bacilli</taxon>
        <taxon>Lactobacillales</taxon>
        <taxon>Streptococcaceae</taxon>
        <taxon>Streptococcus</taxon>
    </lineage>
</organism>
<evidence type="ECO:0000255" key="1">
    <source>
        <dbReference type="HAMAP-Rule" id="MF_01448"/>
    </source>
</evidence>
<proteinExistence type="inferred from homology"/>
<accession>Q04MP7</accession>
<feature type="chain" id="PRO_0000304859" description="UPF0473 protein SPD_0182">
    <location>
        <begin position="1"/>
        <end position="101"/>
    </location>
</feature>
<sequence length="101" mass="11759">MSHDHNHDHEERELITLVDEQGNETLFEILLTIDGKEEFGKNYVLLVPVNAEEDEDGQVEIQAYSFIENEDGTEGELQPIPEDSEDEWNMIEEVFNSFMEE</sequence>
<dbReference type="EMBL" id="CP000410">
    <property type="protein sequence ID" value="ABJ54979.1"/>
    <property type="molecule type" value="Genomic_DNA"/>
</dbReference>
<dbReference type="RefSeq" id="WP_000017620.1">
    <property type="nucleotide sequence ID" value="NZ_JAMLJR010000002.1"/>
</dbReference>
<dbReference type="PaxDb" id="373153-SPD_0182"/>
<dbReference type="KEGG" id="spd:SPD_0182"/>
<dbReference type="eggNOG" id="COG3906">
    <property type="taxonomic scope" value="Bacteria"/>
</dbReference>
<dbReference type="HOGENOM" id="CLU_146610_2_1_9"/>
<dbReference type="BioCyc" id="SPNE373153:G1G6V-203-MONOMER"/>
<dbReference type="Proteomes" id="UP000001452">
    <property type="component" value="Chromosome"/>
</dbReference>
<dbReference type="HAMAP" id="MF_01448">
    <property type="entry name" value="UPF0473"/>
    <property type="match status" value="1"/>
</dbReference>
<dbReference type="InterPro" id="IPR009711">
    <property type="entry name" value="UPF0473"/>
</dbReference>
<dbReference type="NCBIfam" id="NF010215">
    <property type="entry name" value="PRK13678.1-2"/>
    <property type="match status" value="1"/>
</dbReference>
<dbReference type="NCBIfam" id="NF010217">
    <property type="entry name" value="PRK13678.1-4"/>
    <property type="match status" value="1"/>
</dbReference>
<dbReference type="PANTHER" id="PTHR40066">
    <property type="entry name" value="UPF0473 PROTEIN CBO2561/CLC_2432"/>
    <property type="match status" value="1"/>
</dbReference>
<dbReference type="PANTHER" id="PTHR40066:SF1">
    <property type="entry name" value="UPF0473 PROTEIN CBO2561_CLC_2432"/>
    <property type="match status" value="1"/>
</dbReference>
<dbReference type="Pfam" id="PF06949">
    <property type="entry name" value="DUF1292"/>
    <property type="match status" value="1"/>
</dbReference>
<comment type="similarity">
    <text evidence="1">Belongs to the UPF0473 family.</text>
</comment>
<keyword id="KW-1185">Reference proteome</keyword>
<name>Y182_STRP2</name>
<gene>
    <name type="ordered locus">SPD_0182</name>
</gene>